<protein>
    <recommendedName>
        <fullName evidence="2">Sulfate adenylyltransferase subunit 1</fullName>
        <ecNumber evidence="2">2.7.7.4</ecNumber>
    </recommendedName>
    <alternativeName>
        <fullName evidence="2">ATP-sulfurylase large subunit</fullName>
    </alternativeName>
    <alternativeName>
        <fullName evidence="2">Sulfate adenylate transferase</fullName>
        <shortName evidence="2">SAT</shortName>
    </alternativeName>
</protein>
<proteinExistence type="inferred from homology"/>
<organism>
    <name type="scientific">Francisella tularensis subsp. novicida (strain U112)</name>
    <dbReference type="NCBI Taxonomy" id="401614"/>
    <lineage>
        <taxon>Bacteria</taxon>
        <taxon>Pseudomonadati</taxon>
        <taxon>Pseudomonadota</taxon>
        <taxon>Gammaproteobacteria</taxon>
        <taxon>Thiotrichales</taxon>
        <taxon>Francisellaceae</taxon>
        <taxon>Francisella</taxon>
    </lineage>
</organism>
<sequence>MSHKSDLIATNIQKYLQQHQQKELLRFITCGSVDDGKSTLIGRLLHDSKLIFEDQLASIVADSKKVGTQGDRLDLALLVDGLQSEREQGITIDVAYRYFSTDKRKFIIADTPGHEQYTRNMATGASNCDLAIILIDARKGLQTQTRRHSFICSLLGIKHVIVAVNKMDTVGYSQQIYKSIQDEYLKLAGSLQIPDIRFVPISALDGDNVVSKSTKMPWFRGSPLMHYLETIKIDYAHTDEFRFPVQLVCRPNSEFRGFQGTVVSGSAKIGDTIRVMPSGKITTIKSILSFDGELNEAEAGQSITITTYDEIDISRGDMIVHKDAISHVSSMLRANIVWMSEQPLIEYKDYYIKFLTKQVIGSVNKFNYKTDINTLKEVACGTLELNEIATVELNLSEPVCFDSYQKNRTTGAFIIIDRLTNVTAGAGMVIKPLAANDKKDSTNDYSEFELELNALIRKHFPHWDAKNLRE</sequence>
<evidence type="ECO:0000250" key="1"/>
<evidence type="ECO:0000255" key="2">
    <source>
        <dbReference type="HAMAP-Rule" id="MF_00062"/>
    </source>
</evidence>
<name>CYSN_FRATN</name>
<gene>
    <name evidence="2" type="primary">cysN</name>
    <name type="ordered locus">FTN_0927</name>
</gene>
<reference key="1">
    <citation type="journal article" date="2007" name="Genome Biol.">
        <title>Comparison of Francisella tularensis genomes reveals evolutionary events associated with the emergence of human pathogenic strains.</title>
        <authorList>
            <person name="Rohmer L."/>
            <person name="Fong C."/>
            <person name="Abmayr S."/>
            <person name="Wasnick M."/>
            <person name="Larson Freeman T.J."/>
            <person name="Radey M."/>
            <person name="Guina T."/>
            <person name="Svensson K."/>
            <person name="Hayden H.S."/>
            <person name="Jacobs M."/>
            <person name="Gallagher L.A."/>
            <person name="Manoil C."/>
            <person name="Ernst R.K."/>
            <person name="Drees B."/>
            <person name="Buckley D."/>
            <person name="Haugen E."/>
            <person name="Bovee D."/>
            <person name="Zhou Y."/>
            <person name="Chang J."/>
            <person name="Levy R."/>
            <person name="Lim R."/>
            <person name="Gillett W."/>
            <person name="Guenthener D."/>
            <person name="Kang A."/>
            <person name="Shaffer S.A."/>
            <person name="Taylor G."/>
            <person name="Chen J."/>
            <person name="Gallis B."/>
            <person name="D'Argenio D.A."/>
            <person name="Forsman M."/>
            <person name="Olson M.V."/>
            <person name="Goodlett D.R."/>
            <person name="Kaul R."/>
            <person name="Miller S.I."/>
            <person name="Brittnacher M.J."/>
        </authorList>
    </citation>
    <scope>NUCLEOTIDE SEQUENCE [LARGE SCALE GENOMIC DNA]</scope>
    <source>
        <strain>U112</strain>
    </source>
</reference>
<dbReference type="EC" id="2.7.7.4" evidence="2"/>
<dbReference type="EMBL" id="CP000439">
    <property type="protein sequence ID" value="ABK89815.1"/>
    <property type="molecule type" value="Genomic_DNA"/>
</dbReference>
<dbReference type="RefSeq" id="WP_003039271.1">
    <property type="nucleotide sequence ID" value="NC_008601.1"/>
</dbReference>
<dbReference type="SMR" id="A0Q6F0"/>
<dbReference type="KEGG" id="ftn:FTN_0927"/>
<dbReference type="KEGG" id="ftx:AW25_1090"/>
<dbReference type="BioCyc" id="FTUL401614:G1G75-966-MONOMER"/>
<dbReference type="UniPathway" id="UPA00140">
    <property type="reaction ID" value="UER00204"/>
</dbReference>
<dbReference type="Proteomes" id="UP000000762">
    <property type="component" value="Chromosome"/>
</dbReference>
<dbReference type="GO" id="GO:0005524">
    <property type="term" value="F:ATP binding"/>
    <property type="evidence" value="ECO:0007669"/>
    <property type="project" value="UniProtKB-KW"/>
</dbReference>
<dbReference type="GO" id="GO:0005525">
    <property type="term" value="F:GTP binding"/>
    <property type="evidence" value="ECO:0007669"/>
    <property type="project" value="UniProtKB-UniRule"/>
</dbReference>
<dbReference type="GO" id="GO:0003924">
    <property type="term" value="F:GTPase activity"/>
    <property type="evidence" value="ECO:0007669"/>
    <property type="project" value="InterPro"/>
</dbReference>
<dbReference type="GO" id="GO:0097216">
    <property type="term" value="F:guanosine tetraphosphate binding"/>
    <property type="evidence" value="ECO:0007669"/>
    <property type="project" value="UniProtKB-ARBA"/>
</dbReference>
<dbReference type="GO" id="GO:0004781">
    <property type="term" value="F:sulfate adenylyltransferase (ATP) activity"/>
    <property type="evidence" value="ECO:0007669"/>
    <property type="project" value="UniProtKB-UniRule"/>
</dbReference>
<dbReference type="GO" id="GO:0070814">
    <property type="term" value="P:hydrogen sulfide biosynthetic process"/>
    <property type="evidence" value="ECO:0007669"/>
    <property type="project" value="UniProtKB-UniRule"/>
</dbReference>
<dbReference type="GO" id="GO:0000103">
    <property type="term" value="P:sulfate assimilation"/>
    <property type="evidence" value="ECO:0007669"/>
    <property type="project" value="UniProtKB-UniRule"/>
</dbReference>
<dbReference type="CDD" id="cd04166">
    <property type="entry name" value="CysN_ATPS"/>
    <property type="match status" value="1"/>
</dbReference>
<dbReference type="CDD" id="cd03695">
    <property type="entry name" value="CysN_NodQ_II"/>
    <property type="match status" value="1"/>
</dbReference>
<dbReference type="CDD" id="cd04095">
    <property type="entry name" value="CysN_NoDQ_III"/>
    <property type="match status" value="1"/>
</dbReference>
<dbReference type="FunFam" id="3.40.50.300:FF:000119">
    <property type="entry name" value="Sulfate adenylyltransferase subunit 1"/>
    <property type="match status" value="1"/>
</dbReference>
<dbReference type="Gene3D" id="3.40.50.300">
    <property type="entry name" value="P-loop containing nucleotide triphosphate hydrolases"/>
    <property type="match status" value="1"/>
</dbReference>
<dbReference type="Gene3D" id="2.40.30.10">
    <property type="entry name" value="Translation factors"/>
    <property type="match status" value="2"/>
</dbReference>
<dbReference type="HAMAP" id="MF_00062">
    <property type="entry name" value="Sulf_adenylyltr_sub1"/>
    <property type="match status" value="1"/>
</dbReference>
<dbReference type="InterPro" id="IPR041757">
    <property type="entry name" value="CysN_GTP-bd"/>
</dbReference>
<dbReference type="InterPro" id="IPR044138">
    <property type="entry name" value="CysN_II"/>
</dbReference>
<dbReference type="InterPro" id="IPR044139">
    <property type="entry name" value="CysN_NoDQ_III"/>
</dbReference>
<dbReference type="InterPro" id="IPR004161">
    <property type="entry name" value="EFTu-like_2"/>
</dbReference>
<dbReference type="InterPro" id="IPR031157">
    <property type="entry name" value="G_TR_CS"/>
</dbReference>
<dbReference type="InterPro" id="IPR054696">
    <property type="entry name" value="GTP-eEF1A_C"/>
</dbReference>
<dbReference type="InterPro" id="IPR027417">
    <property type="entry name" value="P-loop_NTPase"/>
</dbReference>
<dbReference type="InterPro" id="IPR005225">
    <property type="entry name" value="Small_GTP-bd"/>
</dbReference>
<dbReference type="InterPro" id="IPR011779">
    <property type="entry name" value="SO4_adenylTrfase_lsu"/>
</dbReference>
<dbReference type="InterPro" id="IPR000795">
    <property type="entry name" value="T_Tr_GTP-bd_dom"/>
</dbReference>
<dbReference type="InterPro" id="IPR050100">
    <property type="entry name" value="TRAFAC_GTPase_members"/>
</dbReference>
<dbReference type="InterPro" id="IPR009000">
    <property type="entry name" value="Transl_B-barrel_sf"/>
</dbReference>
<dbReference type="InterPro" id="IPR009001">
    <property type="entry name" value="Transl_elong_EF1A/Init_IF2_C"/>
</dbReference>
<dbReference type="NCBIfam" id="TIGR02034">
    <property type="entry name" value="CysN"/>
    <property type="match status" value="1"/>
</dbReference>
<dbReference type="NCBIfam" id="NF003478">
    <property type="entry name" value="PRK05124.1"/>
    <property type="match status" value="1"/>
</dbReference>
<dbReference type="NCBIfam" id="TIGR00231">
    <property type="entry name" value="small_GTP"/>
    <property type="match status" value="1"/>
</dbReference>
<dbReference type="PANTHER" id="PTHR23115">
    <property type="entry name" value="TRANSLATION FACTOR"/>
    <property type="match status" value="1"/>
</dbReference>
<dbReference type="Pfam" id="PF22594">
    <property type="entry name" value="GTP-eEF1A_C"/>
    <property type="match status" value="1"/>
</dbReference>
<dbReference type="Pfam" id="PF00009">
    <property type="entry name" value="GTP_EFTU"/>
    <property type="match status" value="1"/>
</dbReference>
<dbReference type="Pfam" id="PF03144">
    <property type="entry name" value="GTP_EFTU_D2"/>
    <property type="match status" value="1"/>
</dbReference>
<dbReference type="PRINTS" id="PR00315">
    <property type="entry name" value="ELONGATNFCT"/>
</dbReference>
<dbReference type="SUPFAM" id="SSF50465">
    <property type="entry name" value="EF-Tu/eEF-1alpha/eIF2-gamma C-terminal domain"/>
    <property type="match status" value="1"/>
</dbReference>
<dbReference type="SUPFAM" id="SSF52540">
    <property type="entry name" value="P-loop containing nucleoside triphosphate hydrolases"/>
    <property type="match status" value="1"/>
</dbReference>
<dbReference type="SUPFAM" id="SSF50447">
    <property type="entry name" value="Translation proteins"/>
    <property type="match status" value="1"/>
</dbReference>
<dbReference type="PROSITE" id="PS00301">
    <property type="entry name" value="G_TR_1"/>
    <property type="match status" value="1"/>
</dbReference>
<dbReference type="PROSITE" id="PS51722">
    <property type="entry name" value="G_TR_2"/>
    <property type="match status" value="1"/>
</dbReference>
<feature type="chain" id="PRO_1000092143" description="Sulfate adenylyltransferase subunit 1">
    <location>
        <begin position="1"/>
        <end position="470"/>
    </location>
</feature>
<feature type="domain" description="tr-type G">
    <location>
        <begin position="22"/>
        <end position="236"/>
    </location>
</feature>
<feature type="region of interest" description="G1" evidence="1">
    <location>
        <begin position="31"/>
        <end position="38"/>
    </location>
</feature>
<feature type="region of interest" description="G2" evidence="1">
    <location>
        <begin position="89"/>
        <end position="93"/>
    </location>
</feature>
<feature type="region of interest" description="G3" evidence="1">
    <location>
        <begin position="110"/>
        <end position="113"/>
    </location>
</feature>
<feature type="region of interest" description="G4" evidence="1">
    <location>
        <begin position="165"/>
        <end position="168"/>
    </location>
</feature>
<feature type="region of interest" description="G5" evidence="1">
    <location>
        <begin position="202"/>
        <end position="204"/>
    </location>
</feature>
<feature type="binding site" evidence="2">
    <location>
        <begin position="31"/>
        <end position="38"/>
    </location>
    <ligand>
        <name>GTP</name>
        <dbReference type="ChEBI" id="CHEBI:37565"/>
    </ligand>
</feature>
<feature type="binding site" evidence="2">
    <location>
        <begin position="110"/>
        <end position="114"/>
    </location>
    <ligand>
        <name>GTP</name>
        <dbReference type="ChEBI" id="CHEBI:37565"/>
    </ligand>
</feature>
<feature type="binding site" evidence="2">
    <location>
        <begin position="165"/>
        <end position="168"/>
    </location>
    <ligand>
        <name>GTP</name>
        <dbReference type="ChEBI" id="CHEBI:37565"/>
    </ligand>
</feature>
<comment type="function">
    <text evidence="2">With CysD forms the ATP sulfurylase (ATPS) that catalyzes the adenylation of sulfate producing adenosine 5'-phosphosulfate (APS) and diphosphate, the first enzymatic step in sulfur assimilation pathway. APS synthesis involves the formation of a high-energy phosphoric-sulfuric acid anhydride bond driven by GTP hydrolysis by CysN coupled to ATP hydrolysis by CysD.</text>
</comment>
<comment type="catalytic activity">
    <reaction evidence="2">
        <text>sulfate + ATP + H(+) = adenosine 5'-phosphosulfate + diphosphate</text>
        <dbReference type="Rhea" id="RHEA:18133"/>
        <dbReference type="ChEBI" id="CHEBI:15378"/>
        <dbReference type="ChEBI" id="CHEBI:16189"/>
        <dbReference type="ChEBI" id="CHEBI:30616"/>
        <dbReference type="ChEBI" id="CHEBI:33019"/>
        <dbReference type="ChEBI" id="CHEBI:58243"/>
        <dbReference type="EC" id="2.7.7.4"/>
    </reaction>
</comment>
<comment type="pathway">
    <text evidence="2">Sulfur metabolism; hydrogen sulfide biosynthesis; sulfite from sulfate: step 1/3.</text>
</comment>
<comment type="subunit">
    <text evidence="2">Heterodimer composed of CysD, the smaller subunit, and CysN.</text>
</comment>
<comment type="similarity">
    <text evidence="2">Belongs to the TRAFAC class translation factor GTPase superfamily. Classic translation factor GTPase family. CysN/NodQ subfamily.</text>
</comment>
<keyword id="KW-0067">ATP-binding</keyword>
<keyword id="KW-0342">GTP-binding</keyword>
<keyword id="KW-0547">Nucleotide-binding</keyword>
<keyword id="KW-0548">Nucleotidyltransferase</keyword>
<keyword id="KW-0808">Transferase</keyword>
<accession>A0Q6F0</accession>